<comment type="function">
    <text evidence="1">Associates with the EF-Tu.GDP complex and induces the exchange of GDP to GTP. It remains bound to the aminoacyl-tRNA.EF-Tu.GTP complex up to the GTP hydrolysis stage on the ribosome.</text>
</comment>
<comment type="subcellular location">
    <subcellularLocation>
        <location evidence="1">Cytoplasm</location>
    </subcellularLocation>
</comment>
<comment type="similarity">
    <text evidence="1">Belongs to the EF-Ts family.</text>
</comment>
<reference key="1">
    <citation type="submission" date="2005-08" db="EMBL/GenBank/DDBJ databases">
        <title>Complete sequence of Chlorobium chlorochromatii CaD3.</title>
        <authorList>
            <consortium name="US DOE Joint Genome Institute"/>
            <person name="Copeland A."/>
            <person name="Lucas S."/>
            <person name="Lapidus A."/>
            <person name="Barry K."/>
            <person name="Detter J.C."/>
            <person name="Glavina T."/>
            <person name="Hammon N."/>
            <person name="Israni S."/>
            <person name="Pitluck S."/>
            <person name="Bryant D."/>
            <person name="Schmutz J."/>
            <person name="Larimer F."/>
            <person name="Land M."/>
            <person name="Kyrpides N."/>
            <person name="Ivanova N."/>
            <person name="Richardson P."/>
        </authorList>
    </citation>
    <scope>NUCLEOTIDE SEQUENCE [LARGE SCALE GENOMIC DNA]</scope>
    <source>
        <strain>CaD3</strain>
    </source>
</reference>
<protein>
    <recommendedName>
        <fullName evidence="1">Elongation factor Ts</fullName>
        <shortName evidence="1">EF-Ts</shortName>
    </recommendedName>
</protein>
<dbReference type="EMBL" id="CP000108">
    <property type="protein sequence ID" value="ABB28899.1"/>
    <property type="molecule type" value="Genomic_DNA"/>
</dbReference>
<dbReference type="SMR" id="Q3AQ26"/>
<dbReference type="STRING" id="340177.Cag_1647"/>
<dbReference type="KEGG" id="cch:Cag_1647"/>
<dbReference type="eggNOG" id="COG0264">
    <property type="taxonomic scope" value="Bacteria"/>
</dbReference>
<dbReference type="HOGENOM" id="CLU_047155_0_2_10"/>
<dbReference type="OrthoDB" id="9808348at2"/>
<dbReference type="GO" id="GO:0005737">
    <property type="term" value="C:cytoplasm"/>
    <property type="evidence" value="ECO:0007669"/>
    <property type="project" value="UniProtKB-SubCell"/>
</dbReference>
<dbReference type="GO" id="GO:0003746">
    <property type="term" value="F:translation elongation factor activity"/>
    <property type="evidence" value="ECO:0007669"/>
    <property type="project" value="UniProtKB-UniRule"/>
</dbReference>
<dbReference type="CDD" id="cd14275">
    <property type="entry name" value="UBA_EF-Ts"/>
    <property type="match status" value="1"/>
</dbReference>
<dbReference type="FunFam" id="1.10.286.20:FF:000001">
    <property type="entry name" value="Elongation factor Ts"/>
    <property type="match status" value="1"/>
</dbReference>
<dbReference type="FunFam" id="1.10.8.10:FF:000001">
    <property type="entry name" value="Elongation factor Ts"/>
    <property type="match status" value="1"/>
</dbReference>
<dbReference type="Gene3D" id="1.10.286.20">
    <property type="match status" value="1"/>
</dbReference>
<dbReference type="Gene3D" id="1.10.8.10">
    <property type="entry name" value="DNA helicase RuvA subunit, C-terminal domain"/>
    <property type="match status" value="1"/>
</dbReference>
<dbReference type="Gene3D" id="3.30.479.20">
    <property type="entry name" value="Elongation factor Ts, dimerisation domain"/>
    <property type="match status" value="2"/>
</dbReference>
<dbReference type="HAMAP" id="MF_00050">
    <property type="entry name" value="EF_Ts"/>
    <property type="match status" value="1"/>
</dbReference>
<dbReference type="InterPro" id="IPR036402">
    <property type="entry name" value="EF-Ts_dimer_sf"/>
</dbReference>
<dbReference type="InterPro" id="IPR001816">
    <property type="entry name" value="Transl_elong_EFTs/EF1B"/>
</dbReference>
<dbReference type="InterPro" id="IPR014039">
    <property type="entry name" value="Transl_elong_EFTs/EF1B_dimer"/>
</dbReference>
<dbReference type="InterPro" id="IPR018101">
    <property type="entry name" value="Transl_elong_Ts_CS"/>
</dbReference>
<dbReference type="InterPro" id="IPR009060">
    <property type="entry name" value="UBA-like_sf"/>
</dbReference>
<dbReference type="NCBIfam" id="TIGR00116">
    <property type="entry name" value="tsf"/>
    <property type="match status" value="1"/>
</dbReference>
<dbReference type="PANTHER" id="PTHR11741">
    <property type="entry name" value="ELONGATION FACTOR TS"/>
    <property type="match status" value="1"/>
</dbReference>
<dbReference type="PANTHER" id="PTHR11741:SF0">
    <property type="entry name" value="ELONGATION FACTOR TS, MITOCHONDRIAL"/>
    <property type="match status" value="1"/>
</dbReference>
<dbReference type="Pfam" id="PF00889">
    <property type="entry name" value="EF_TS"/>
    <property type="match status" value="1"/>
</dbReference>
<dbReference type="SUPFAM" id="SSF54713">
    <property type="entry name" value="Elongation factor Ts (EF-Ts), dimerisation domain"/>
    <property type="match status" value="2"/>
</dbReference>
<dbReference type="SUPFAM" id="SSF46934">
    <property type="entry name" value="UBA-like"/>
    <property type="match status" value="1"/>
</dbReference>
<dbReference type="PROSITE" id="PS01126">
    <property type="entry name" value="EF_TS_1"/>
    <property type="match status" value="1"/>
</dbReference>
<dbReference type="PROSITE" id="PS01127">
    <property type="entry name" value="EF_TS_2"/>
    <property type="match status" value="1"/>
</dbReference>
<proteinExistence type="inferred from homology"/>
<sequence length="288" mass="31348">MSQISAADVKNLRDITGAGMMDCKKALDETGGDMQQAIDFLRKKGAALAAKRADREAHEGMIQVKLANDCKRGVLLELNCETDFVARGNDFTSFTAALSELALSQCVASAEAMLPLALGAAYDGETVDSAMKTMTGKLGEKINLKRLAFFDMPDGVVEGYIHPGAKLGAIVSLKTDKPELVGELAKDLAMQIAAAAPIVVDRSGVPADYIAKEAEIYRQQALEQGKKEEFVDKIVTGRLEKYYQDVVLTEQVFIKDDKLKVSAMLDQFRKKNQATLDVVGFVRYQLGE</sequence>
<accession>Q3AQ26</accession>
<keyword id="KW-0963">Cytoplasm</keyword>
<keyword id="KW-0251">Elongation factor</keyword>
<keyword id="KW-0648">Protein biosynthesis</keyword>
<organism>
    <name type="scientific">Chlorobium chlorochromatii (strain CaD3)</name>
    <dbReference type="NCBI Taxonomy" id="340177"/>
    <lineage>
        <taxon>Bacteria</taxon>
        <taxon>Pseudomonadati</taxon>
        <taxon>Chlorobiota</taxon>
        <taxon>Chlorobiia</taxon>
        <taxon>Chlorobiales</taxon>
        <taxon>Chlorobiaceae</taxon>
        <taxon>Chlorobium/Pelodictyon group</taxon>
        <taxon>Chlorobium</taxon>
    </lineage>
</organism>
<gene>
    <name evidence="1" type="primary">tsf</name>
    <name type="ordered locus">Cag_1647</name>
</gene>
<feature type="chain" id="PRO_0000241474" description="Elongation factor Ts">
    <location>
        <begin position="1"/>
        <end position="288"/>
    </location>
</feature>
<feature type="region of interest" description="Involved in Mg(2+) ion dislocation from EF-Tu" evidence="1">
    <location>
        <begin position="82"/>
        <end position="85"/>
    </location>
</feature>
<evidence type="ECO:0000255" key="1">
    <source>
        <dbReference type="HAMAP-Rule" id="MF_00050"/>
    </source>
</evidence>
<name>EFTS_CHLCH</name>